<protein>
    <recommendedName>
        <fullName>Cytochrome P450 2B15</fullName>
        <ecNumber>1.14.14.1</ecNumber>
    </recommendedName>
    <alternativeName>
        <fullName>CYPIIB15</fullName>
    </alternativeName>
</protein>
<feature type="chain" id="PRO_0000051688" description="Cytochrome P450 2B15">
    <location>
        <begin position="1"/>
        <end position="495"/>
    </location>
</feature>
<feature type="binding site" description="axial binding residue" evidence="1">
    <location>
        <position position="437"/>
    </location>
    <ligand>
        <name>heme</name>
        <dbReference type="ChEBI" id="CHEBI:30413"/>
    </ligand>
    <ligandPart>
        <name>Fe</name>
        <dbReference type="ChEBI" id="CHEBI:18248"/>
    </ligandPart>
</feature>
<feature type="modified residue" description="Phosphoserine; by PKA" evidence="2">
    <location>
        <position position="129"/>
    </location>
</feature>
<evidence type="ECO:0000250" key="1"/>
<evidence type="ECO:0000250" key="2">
    <source>
        <dbReference type="UniProtKB" id="P00176"/>
    </source>
</evidence>
<evidence type="ECO:0000305" key="3"/>
<proteinExistence type="inferred from homology"/>
<organism>
    <name type="scientific">Rattus norvegicus</name>
    <name type="common">Rat</name>
    <dbReference type="NCBI Taxonomy" id="10116"/>
    <lineage>
        <taxon>Eukaryota</taxon>
        <taxon>Metazoa</taxon>
        <taxon>Chordata</taxon>
        <taxon>Craniata</taxon>
        <taxon>Vertebrata</taxon>
        <taxon>Euteleostomi</taxon>
        <taxon>Mammalia</taxon>
        <taxon>Eutheria</taxon>
        <taxon>Euarchontoglires</taxon>
        <taxon>Glires</taxon>
        <taxon>Rodentia</taxon>
        <taxon>Myomorpha</taxon>
        <taxon>Muroidea</taxon>
        <taxon>Muridae</taxon>
        <taxon>Murinae</taxon>
        <taxon>Rattus</taxon>
    </lineage>
</organism>
<comment type="function">
    <text evidence="1">Cytochromes P450 are a group of heme-thiolate monooxygenases. In liver microsomes, this enzyme is involved in an NADPH-dependent electron transport pathway. It oxidizes a variety of structurally unrelated compounds, including steroids, fatty acids, and xenobiotics (By similarity).</text>
</comment>
<comment type="catalytic activity">
    <reaction>
        <text>an organic molecule + reduced [NADPH--hemoprotein reductase] + O2 = an alcohol + oxidized [NADPH--hemoprotein reductase] + H2O + H(+)</text>
        <dbReference type="Rhea" id="RHEA:17149"/>
        <dbReference type="Rhea" id="RHEA-COMP:11964"/>
        <dbReference type="Rhea" id="RHEA-COMP:11965"/>
        <dbReference type="ChEBI" id="CHEBI:15377"/>
        <dbReference type="ChEBI" id="CHEBI:15378"/>
        <dbReference type="ChEBI" id="CHEBI:15379"/>
        <dbReference type="ChEBI" id="CHEBI:30879"/>
        <dbReference type="ChEBI" id="CHEBI:57618"/>
        <dbReference type="ChEBI" id="CHEBI:58210"/>
        <dbReference type="ChEBI" id="CHEBI:142491"/>
        <dbReference type="EC" id="1.14.14.1"/>
    </reaction>
</comment>
<comment type="cofactor">
    <cofactor evidence="1">
        <name>heme</name>
        <dbReference type="ChEBI" id="CHEBI:30413"/>
    </cofactor>
</comment>
<comment type="subcellular location">
    <subcellularLocation>
        <location evidence="1">Endoplasmic reticulum membrane</location>
        <topology evidence="1">Peripheral membrane protein</topology>
    </subcellularLocation>
    <subcellularLocation>
        <location evidence="1">Microsome membrane</location>
        <topology evidence="1">Peripheral membrane protein</topology>
    </subcellularLocation>
</comment>
<comment type="similarity">
    <text evidence="3">Belongs to the cytochrome P450 family.</text>
</comment>
<dbReference type="EC" id="1.14.14.1"/>
<dbReference type="EMBL" id="D17349">
    <property type="protein sequence ID" value="BAB72140.1"/>
    <property type="molecule type" value="Genomic_DNA"/>
</dbReference>
<dbReference type="PIR" id="I53690">
    <property type="entry name" value="I53690"/>
</dbReference>
<dbReference type="PIR" id="I67791">
    <property type="entry name" value="I67791"/>
</dbReference>
<dbReference type="RefSeq" id="NP_001129140.1">
    <property type="nucleotide sequence ID" value="NM_001135668.1"/>
</dbReference>
<dbReference type="SMR" id="Q64583"/>
<dbReference type="FunCoup" id="Q64583">
    <property type="interactions" value="52"/>
</dbReference>
<dbReference type="STRING" id="10116.ENSRNOP00000002054"/>
<dbReference type="iPTMnet" id="Q64583"/>
<dbReference type="PhosphoSitePlus" id="Q64583"/>
<dbReference type="PaxDb" id="10116-ENSRNOP00000002054"/>
<dbReference type="GeneID" id="685222"/>
<dbReference type="KEGG" id="rno:685222"/>
<dbReference type="UCSC" id="RGD:620088">
    <property type="organism name" value="rat"/>
</dbReference>
<dbReference type="AGR" id="RGD:1596474"/>
<dbReference type="CTD" id="685222"/>
<dbReference type="RGD" id="1596474">
    <property type="gene designation" value="Cyp2b15"/>
</dbReference>
<dbReference type="eggNOG" id="KOG0156">
    <property type="taxonomic scope" value="Eukaryota"/>
</dbReference>
<dbReference type="InParanoid" id="Q64583"/>
<dbReference type="OrthoDB" id="72591at9989"/>
<dbReference type="PhylomeDB" id="Q64583"/>
<dbReference type="PRO" id="PR:Q64583"/>
<dbReference type="Proteomes" id="UP000002494">
    <property type="component" value="Unplaced"/>
</dbReference>
<dbReference type="GO" id="GO:0005737">
    <property type="term" value="C:cytoplasm"/>
    <property type="evidence" value="ECO:0000318"/>
    <property type="project" value="GO_Central"/>
</dbReference>
<dbReference type="GO" id="GO:0005789">
    <property type="term" value="C:endoplasmic reticulum membrane"/>
    <property type="evidence" value="ECO:0007669"/>
    <property type="project" value="UniProtKB-SubCell"/>
</dbReference>
<dbReference type="GO" id="GO:0043231">
    <property type="term" value="C:intracellular membrane-bounded organelle"/>
    <property type="evidence" value="ECO:0000318"/>
    <property type="project" value="GO_Central"/>
</dbReference>
<dbReference type="GO" id="GO:0008392">
    <property type="term" value="F:arachidonate epoxygenase activity"/>
    <property type="evidence" value="ECO:0000318"/>
    <property type="project" value="GO_Central"/>
</dbReference>
<dbReference type="GO" id="GO:0020037">
    <property type="term" value="F:heme binding"/>
    <property type="evidence" value="ECO:0000318"/>
    <property type="project" value="GO_Central"/>
</dbReference>
<dbReference type="GO" id="GO:0005506">
    <property type="term" value="F:iron ion binding"/>
    <property type="evidence" value="ECO:0007669"/>
    <property type="project" value="InterPro"/>
</dbReference>
<dbReference type="GO" id="GO:0016712">
    <property type="term" value="F:oxidoreductase activity, acting on paired donors, with incorporation or reduction of molecular oxygen, reduced flavin or flavoprotein as one donor, and incorporation of one atom of oxygen"/>
    <property type="evidence" value="ECO:0000318"/>
    <property type="project" value="GO_Central"/>
</dbReference>
<dbReference type="GO" id="GO:0019373">
    <property type="term" value="P:epoxygenase P450 pathway"/>
    <property type="evidence" value="ECO:0000318"/>
    <property type="project" value="GO_Central"/>
</dbReference>
<dbReference type="GO" id="GO:0006805">
    <property type="term" value="P:xenobiotic metabolic process"/>
    <property type="evidence" value="ECO:0000318"/>
    <property type="project" value="GO_Central"/>
</dbReference>
<dbReference type="CDD" id="cd20672">
    <property type="entry name" value="CYP2B"/>
    <property type="match status" value="1"/>
</dbReference>
<dbReference type="FunFam" id="1.10.630.10:FF:000001">
    <property type="entry name" value="Cytochrome P450, family 2"/>
    <property type="match status" value="1"/>
</dbReference>
<dbReference type="Gene3D" id="1.10.630.10">
    <property type="entry name" value="Cytochrome P450"/>
    <property type="match status" value="1"/>
</dbReference>
<dbReference type="InterPro" id="IPR001128">
    <property type="entry name" value="Cyt_P450"/>
</dbReference>
<dbReference type="InterPro" id="IPR017972">
    <property type="entry name" value="Cyt_P450_CS"/>
</dbReference>
<dbReference type="InterPro" id="IPR002401">
    <property type="entry name" value="Cyt_P450_E_grp-I"/>
</dbReference>
<dbReference type="InterPro" id="IPR008068">
    <property type="entry name" value="Cyt_P450_E_grp-I_CYP2B-like"/>
</dbReference>
<dbReference type="InterPro" id="IPR036396">
    <property type="entry name" value="Cyt_P450_sf"/>
</dbReference>
<dbReference type="InterPro" id="IPR050182">
    <property type="entry name" value="Cytochrome_P450_fam2"/>
</dbReference>
<dbReference type="PANTHER" id="PTHR24300">
    <property type="entry name" value="CYTOCHROME P450 508A4-RELATED"/>
    <property type="match status" value="1"/>
</dbReference>
<dbReference type="PANTHER" id="PTHR24300:SF277">
    <property type="entry name" value="CYTOCHROME P450-RELATED"/>
    <property type="match status" value="1"/>
</dbReference>
<dbReference type="Pfam" id="PF00067">
    <property type="entry name" value="p450"/>
    <property type="match status" value="1"/>
</dbReference>
<dbReference type="PRINTS" id="PR00463">
    <property type="entry name" value="EP450I"/>
</dbReference>
<dbReference type="PRINTS" id="PR01685">
    <property type="entry name" value="EP450ICYP2B"/>
</dbReference>
<dbReference type="PRINTS" id="PR00385">
    <property type="entry name" value="P450"/>
</dbReference>
<dbReference type="SUPFAM" id="SSF48264">
    <property type="entry name" value="Cytochrome P450"/>
    <property type="match status" value="1"/>
</dbReference>
<dbReference type="PROSITE" id="PS00086">
    <property type="entry name" value="CYTOCHROME_P450"/>
    <property type="match status" value="1"/>
</dbReference>
<gene>
    <name type="primary">Cyp2b15</name>
</gene>
<name>CP2BF_RAT</name>
<reference key="1">
    <citation type="journal article" date="1993" name="Gene">
        <title>Cloning and sequencing of a novel rat cytochrome P450 2B-encoding gene.</title>
        <authorList>
            <person name="Nakayama K."/>
            <person name="Suwa Y."/>
            <person name="Mizukami Y."/>
            <person name="Sogawa K."/>
            <person name="Fujii-Kuriyama Y."/>
        </authorList>
    </citation>
    <scope>NUCLEOTIDE SEQUENCE [GENOMIC DNA]</scope>
    <source>
        <strain>Sprague-Dawley</strain>
    </source>
</reference>
<sequence length="495" mass="56320">MELGVLLLLTFTVGFLLLLASQNRPKTHGHLPPGPRPLPFLGNLLQMNRRGLLRSFMQLQEKYGDVFTVHLGPRPVVILCGTDTIREALVDQAEAFSGRGTVAVLHPVVQGYGVIFANGERWKILRRFSLVTMRNFGMGKRSVEERIKEEAQCLVEELKKYKGALLNPTSIFQSIAANIICSIVFGERFDYKDHQFLRLLDLIYQTFSLMGSLSSQVFELFSGFLKYFPGVHKQISKNLQEILNYIDHSVEKHRATLDPNTPRDFINTYLLRMEKEKSNHHTEFHHQNLVISVLSLFFTGTETTSTTLRYSFLIMLKYPHVAEKVQKEIDQVIGSHRLPTLDDRTKMPYTDAVIHEIQRFADLIPIGLPHRVTNDTMFLGYLLPKNTEVYPILSSALHDPRYFDHPDTFNPEHFLDVNGTLKKSEAFLPFSTGKRICLGEGIAQNELFIFFTAILQNFSLASPVAPEDIDLSPINSGISKIPSPYQIHFLSRCVG</sequence>
<accession>Q64583</accession>
<keyword id="KW-0256">Endoplasmic reticulum</keyword>
<keyword id="KW-0349">Heme</keyword>
<keyword id="KW-0408">Iron</keyword>
<keyword id="KW-0472">Membrane</keyword>
<keyword id="KW-0479">Metal-binding</keyword>
<keyword id="KW-0492">Microsome</keyword>
<keyword id="KW-0503">Monooxygenase</keyword>
<keyword id="KW-0560">Oxidoreductase</keyword>
<keyword id="KW-0597">Phosphoprotein</keyword>
<keyword id="KW-1185">Reference proteome</keyword>